<gene>
    <name evidence="1" type="primary">mraY</name>
    <name type="ordered locus">CPE1860</name>
</gene>
<protein>
    <recommendedName>
        <fullName evidence="1">Phospho-N-acetylmuramoyl-pentapeptide-transferase</fullName>
        <ecNumber evidence="1">2.7.8.13</ecNumber>
    </recommendedName>
    <alternativeName>
        <fullName evidence="1">UDP-MurNAc-pentapeptide phosphotransferase</fullName>
    </alternativeName>
</protein>
<reference key="1">
    <citation type="journal article" date="2002" name="Proc. Natl. Acad. Sci. U.S.A.">
        <title>Complete genome sequence of Clostridium perfringens, an anaerobic flesh-eater.</title>
        <authorList>
            <person name="Shimizu T."/>
            <person name="Ohtani K."/>
            <person name="Hirakawa H."/>
            <person name="Ohshima K."/>
            <person name="Yamashita A."/>
            <person name="Shiba T."/>
            <person name="Ogasawara N."/>
            <person name="Hattori M."/>
            <person name="Kuhara S."/>
            <person name="Hayashi H."/>
        </authorList>
    </citation>
    <scope>NUCLEOTIDE SEQUENCE [LARGE SCALE GENOMIC DNA]</scope>
    <source>
        <strain>13 / Type A</strain>
    </source>
</reference>
<evidence type="ECO:0000255" key="1">
    <source>
        <dbReference type="HAMAP-Rule" id="MF_00038"/>
    </source>
</evidence>
<sequence>MIDPKIVMAIVISFIVASILGPIIIPLLHKLKFGQNIRQEGPKSHLKKAGTPTIGGLIFIFATIITMFIMVGNPTDEAMIALYSFVGFGFVGFLDDLLKIIKKKNEGLTSGQKMILLLIVSGFLTWYAYKYIGTSINIPFLNGQINFGLFYIPFVMFYFAGVTNAVNLTDGLDGLATSVTVLVTTFLGIISYNLGHISLAIFCVALAGALLAFLRFNAFPARVFMGDTGSLALGGAVAMVALILKMPLILVLIGIIYVIETLSVILQVASFKLTGKRIFKMAPIHHHFEQLGWSETKIVSVFSIITVVFCFIAFASL</sequence>
<name>MRAY_CLOPE</name>
<accession>Q8XJA1</accession>
<dbReference type="EC" id="2.7.8.13" evidence="1"/>
<dbReference type="EMBL" id="BA000016">
    <property type="protein sequence ID" value="BAB81566.1"/>
    <property type="molecule type" value="Genomic_DNA"/>
</dbReference>
<dbReference type="SMR" id="Q8XJA1"/>
<dbReference type="STRING" id="195102.gene:10491124"/>
<dbReference type="KEGG" id="cpe:CPE1860"/>
<dbReference type="HOGENOM" id="CLU_023982_0_1_9"/>
<dbReference type="UniPathway" id="UPA00219"/>
<dbReference type="Proteomes" id="UP000000818">
    <property type="component" value="Chromosome"/>
</dbReference>
<dbReference type="GO" id="GO:0005886">
    <property type="term" value="C:plasma membrane"/>
    <property type="evidence" value="ECO:0007669"/>
    <property type="project" value="UniProtKB-SubCell"/>
</dbReference>
<dbReference type="GO" id="GO:0046872">
    <property type="term" value="F:metal ion binding"/>
    <property type="evidence" value="ECO:0007669"/>
    <property type="project" value="UniProtKB-KW"/>
</dbReference>
<dbReference type="GO" id="GO:0008963">
    <property type="term" value="F:phospho-N-acetylmuramoyl-pentapeptide-transferase activity"/>
    <property type="evidence" value="ECO:0007669"/>
    <property type="project" value="UniProtKB-UniRule"/>
</dbReference>
<dbReference type="GO" id="GO:0051992">
    <property type="term" value="F:UDP-N-acetylmuramoyl-L-alanyl-D-glutamyl-meso-2,6-diaminopimelyl-D-alanyl-D-alanine:undecaprenyl-phosphate transferase activity"/>
    <property type="evidence" value="ECO:0007669"/>
    <property type="project" value="RHEA"/>
</dbReference>
<dbReference type="GO" id="GO:0051301">
    <property type="term" value="P:cell division"/>
    <property type="evidence" value="ECO:0007669"/>
    <property type="project" value="UniProtKB-KW"/>
</dbReference>
<dbReference type="GO" id="GO:0071555">
    <property type="term" value="P:cell wall organization"/>
    <property type="evidence" value="ECO:0007669"/>
    <property type="project" value="UniProtKB-KW"/>
</dbReference>
<dbReference type="GO" id="GO:0009252">
    <property type="term" value="P:peptidoglycan biosynthetic process"/>
    <property type="evidence" value="ECO:0007669"/>
    <property type="project" value="UniProtKB-UniRule"/>
</dbReference>
<dbReference type="GO" id="GO:0008360">
    <property type="term" value="P:regulation of cell shape"/>
    <property type="evidence" value="ECO:0007669"/>
    <property type="project" value="UniProtKB-KW"/>
</dbReference>
<dbReference type="CDD" id="cd06852">
    <property type="entry name" value="GT_MraY"/>
    <property type="match status" value="1"/>
</dbReference>
<dbReference type="HAMAP" id="MF_00038">
    <property type="entry name" value="MraY"/>
    <property type="match status" value="1"/>
</dbReference>
<dbReference type="InterPro" id="IPR000715">
    <property type="entry name" value="Glycosyl_transferase_4"/>
</dbReference>
<dbReference type="InterPro" id="IPR003524">
    <property type="entry name" value="PNAcMuramoyl-5peptid_Trfase"/>
</dbReference>
<dbReference type="InterPro" id="IPR018480">
    <property type="entry name" value="PNAcMuramoyl-5peptid_Trfase_CS"/>
</dbReference>
<dbReference type="NCBIfam" id="TIGR00445">
    <property type="entry name" value="mraY"/>
    <property type="match status" value="1"/>
</dbReference>
<dbReference type="PANTHER" id="PTHR22926">
    <property type="entry name" value="PHOSPHO-N-ACETYLMURAMOYL-PENTAPEPTIDE-TRANSFERASE"/>
    <property type="match status" value="1"/>
</dbReference>
<dbReference type="PANTHER" id="PTHR22926:SF5">
    <property type="entry name" value="PHOSPHO-N-ACETYLMURAMOYL-PENTAPEPTIDE-TRANSFERASE HOMOLOG"/>
    <property type="match status" value="1"/>
</dbReference>
<dbReference type="Pfam" id="PF00953">
    <property type="entry name" value="Glycos_transf_4"/>
    <property type="match status" value="1"/>
</dbReference>
<dbReference type="PROSITE" id="PS01348">
    <property type="entry name" value="MRAY_2"/>
    <property type="match status" value="1"/>
</dbReference>
<keyword id="KW-0131">Cell cycle</keyword>
<keyword id="KW-0132">Cell division</keyword>
<keyword id="KW-1003">Cell membrane</keyword>
<keyword id="KW-0133">Cell shape</keyword>
<keyword id="KW-0961">Cell wall biogenesis/degradation</keyword>
<keyword id="KW-0460">Magnesium</keyword>
<keyword id="KW-0472">Membrane</keyword>
<keyword id="KW-0479">Metal-binding</keyword>
<keyword id="KW-0573">Peptidoglycan synthesis</keyword>
<keyword id="KW-1185">Reference proteome</keyword>
<keyword id="KW-0808">Transferase</keyword>
<keyword id="KW-0812">Transmembrane</keyword>
<keyword id="KW-1133">Transmembrane helix</keyword>
<comment type="function">
    <text evidence="1">Catalyzes the initial step of the lipid cycle reactions in the biosynthesis of the cell wall peptidoglycan: transfers peptidoglycan precursor phospho-MurNAc-pentapeptide from UDP-MurNAc-pentapeptide onto the lipid carrier undecaprenyl phosphate, yielding undecaprenyl-pyrophosphoryl-MurNAc-pentapeptide, known as lipid I.</text>
</comment>
<comment type="catalytic activity">
    <reaction evidence="1">
        <text>UDP-N-acetyl-alpha-D-muramoyl-L-alanyl-gamma-D-glutamyl-meso-2,6-diaminopimeloyl-D-alanyl-D-alanine + di-trans,octa-cis-undecaprenyl phosphate = di-trans,octa-cis-undecaprenyl diphospho-N-acetyl-alpha-D-muramoyl-L-alanyl-D-glutamyl-meso-2,6-diaminopimeloyl-D-alanyl-D-alanine + UMP</text>
        <dbReference type="Rhea" id="RHEA:28386"/>
        <dbReference type="ChEBI" id="CHEBI:57865"/>
        <dbReference type="ChEBI" id="CHEBI:60392"/>
        <dbReference type="ChEBI" id="CHEBI:61386"/>
        <dbReference type="ChEBI" id="CHEBI:61387"/>
        <dbReference type="EC" id="2.7.8.13"/>
    </reaction>
</comment>
<comment type="cofactor">
    <cofactor evidence="1">
        <name>Mg(2+)</name>
        <dbReference type="ChEBI" id="CHEBI:18420"/>
    </cofactor>
</comment>
<comment type="pathway">
    <text evidence="1">Cell wall biogenesis; peptidoglycan biosynthesis.</text>
</comment>
<comment type="subcellular location">
    <subcellularLocation>
        <location evidence="1">Cell membrane</location>
        <topology evidence="1">Multi-pass membrane protein</topology>
    </subcellularLocation>
</comment>
<comment type="similarity">
    <text evidence="1">Belongs to the glycosyltransferase 4 family. MraY subfamily.</text>
</comment>
<feature type="chain" id="PRO_0000108811" description="Phospho-N-acetylmuramoyl-pentapeptide-transferase">
    <location>
        <begin position="1"/>
        <end position="317"/>
    </location>
</feature>
<feature type="transmembrane region" description="Helical" evidence="1">
    <location>
        <begin position="6"/>
        <end position="26"/>
    </location>
</feature>
<feature type="transmembrane region" description="Helical" evidence="1">
    <location>
        <begin position="52"/>
        <end position="72"/>
    </location>
</feature>
<feature type="transmembrane region" description="Helical" evidence="1">
    <location>
        <begin position="78"/>
        <end position="98"/>
    </location>
</feature>
<feature type="transmembrane region" description="Helical" evidence="1">
    <location>
        <begin position="114"/>
        <end position="134"/>
    </location>
</feature>
<feature type="transmembrane region" description="Helical" evidence="1">
    <location>
        <begin position="145"/>
        <end position="165"/>
    </location>
</feature>
<feature type="transmembrane region" description="Helical" evidence="1">
    <location>
        <begin position="171"/>
        <end position="191"/>
    </location>
</feature>
<feature type="transmembrane region" description="Helical" evidence="1">
    <location>
        <begin position="194"/>
        <end position="214"/>
    </location>
</feature>
<feature type="transmembrane region" description="Helical" evidence="1">
    <location>
        <begin position="223"/>
        <end position="244"/>
    </location>
</feature>
<feature type="transmembrane region" description="Helical" evidence="1">
    <location>
        <begin position="297"/>
        <end position="317"/>
    </location>
</feature>
<organism>
    <name type="scientific">Clostridium perfringens (strain 13 / Type A)</name>
    <dbReference type="NCBI Taxonomy" id="195102"/>
    <lineage>
        <taxon>Bacteria</taxon>
        <taxon>Bacillati</taxon>
        <taxon>Bacillota</taxon>
        <taxon>Clostridia</taxon>
        <taxon>Eubacteriales</taxon>
        <taxon>Clostridiaceae</taxon>
        <taxon>Clostridium</taxon>
    </lineage>
</organism>
<proteinExistence type="inferred from homology"/>